<evidence type="ECO:0000250" key="1">
    <source>
        <dbReference type="UniProtKB" id="P05937"/>
    </source>
</evidence>
<evidence type="ECO:0000255" key="2">
    <source>
        <dbReference type="PROSITE-ProRule" id="PRU00448"/>
    </source>
</evidence>
<evidence type="ECO:0000269" key="3">
    <source>
    </source>
</evidence>
<evidence type="ECO:0000269" key="4">
    <source>
    </source>
</evidence>
<evidence type="ECO:0000305" key="5"/>
<evidence type="ECO:0000305" key="6">
    <source>
    </source>
</evidence>
<sequence length="262" mass="30167">MTAETHLQGVEISAAQFFEIWHHYDSDGNGYMDGKELQNFIQELQQARKKAGLDLTPEMKAFVDQYGKATDGKIGIVELAQVLPTEENFLLFFRCQQLKSSEDFMQTWRKYDSDHSGFIDSEELKSFLKDLLQKANKQIEDSKLTEYTEIMLRMFDANNDGKLELTELARLLPVQENFLIKFQGVKMCAKEFNKAFEMYDQDGNGYIDENELDALLKDLCEKNKKELDINNLATYKKSIMALSDGGKLYRAELALILCAEEN</sequence>
<name>CALB1_CHICK</name>
<gene>
    <name type="primary">CALB1</name>
</gene>
<organism>
    <name type="scientific">Gallus gallus</name>
    <name type="common">Chicken</name>
    <dbReference type="NCBI Taxonomy" id="9031"/>
    <lineage>
        <taxon>Eukaryota</taxon>
        <taxon>Metazoa</taxon>
        <taxon>Chordata</taxon>
        <taxon>Craniata</taxon>
        <taxon>Vertebrata</taxon>
        <taxon>Euteleostomi</taxon>
        <taxon>Archelosauria</taxon>
        <taxon>Archosauria</taxon>
        <taxon>Dinosauria</taxon>
        <taxon>Saurischia</taxon>
        <taxon>Theropoda</taxon>
        <taxon>Coelurosauria</taxon>
        <taxon>Aves</taxon>
        <taxon>Neognathae</taxon>
        <taxon>Galloanserae</taxon>
        <taxon>Galliformes</taxon>
        <taxon>Phasianidae</taxon>
        <taxon>Phasianinae</taxon>
        <taxon>Gallus</taxon>
    </lineage>
</organism>
<proteinExistence type="evidence at protein level"/>
<accession>P04354</accession>
<feature type="initiator methionine" description="Removed" evidence="3">
    <location>
        <position position="1"/>
    </location>
</feature>
<feature type="chain" id="PRO_0000073476" description="Calbindin">
    <location>
        <begin position="2"/>
        <end position="262"/>
    </location>
</feature>
<feature type="domain" description="EF-hand 1" evidence="2">
    <location>
        <begin position="12"/>
        <end position="47"/>
    </location>
</feature>
<feature type="domain" description="EF-hand 2" evidence="2">
    <location>
        <begin position="54"/>
        <end position="89"/>
    </location>
</feature>
<feature type="domain" description="EF-hand 3" evidence="2">
    <location>
        <begin position="99"/>
        <end position="134"/>
    </location>
</feature>
<feature type="domain" description="EF-hand 4" evidence="2">
    <location>
        <begin position="143"/>
        <end position="178"/>
    </location>
</feature>
<feature type="domain" description="EF-hand 5" evidence="2">
    <location>
        <begin position="187"/>
        <end position="222"/>
    </location>
</feature>
<feature type="binding site" evidence="2">
    <location>
        <position position="25"/>
    </location>
    <ligand>
        <name>Ca(2+)</name>
        <dbReference type="ChEBI" id="CHEBI:29108"/>
        <label>1</label>
    </ligand>
</feature>
<feature type="binding site" evidence="2">
    <location>
        <position position="27"/>
    </location>
    <ligand>
        <name>Ca(2+)</name>
        <dbReference type="ChEBI" id="CHEBI:29108"/>
        <label>1</label>
    </ligand>
</feature>
<feature type="binding site" evidence="2">
    <location>
        <position position="29"/>
    </location>
    <ligand>
        <name>Ca(2+)</name>
        <dbReference type="ChEBI" id="CHEBI:29108"/>
        <label>1</label>
    </ligand>
</feature>
<feature type="binding site" evidence="2">
    <location>
        <position position="31"/>
    </location>
    <ligand>
        <name>Ca(2+)</name>
        <dbReference type="ChEBI" id="CHEBI:29108"/>
        <label>1</label>
    </ligand>
</feature>
<feature type="binding site" evidence="2">
    <location>
        <position position="36"/>
    </location>
    <ligand>
        <name>Ca(2+)</name>
        <dbReference type="ChEBI" id="CHEBI:29108"/>
        <label>1</label>
    </ligand>
</feature>
<feature type="binding site" evidence="2">
    <location>
        <position position="112"/>
    </location>
    <ligand>
        <name>Ca(2+)</name>
        <dbReference type="ChEBI" id="CHEBI:29108"/>
        <label>2</label>
    </ligand>
</feature>
<feature type="binding site" evidence="2">
    <location>
        <position position="114"/>
    </location>
    <ligand>
        <name>Ca(2+)</name>
        <dbReference type="ChEBI" id="CHEBI:29108"/>
        <label>2</label>
    </ligand>
</feature>
<feature type="binding site" evidence="2">
    <location>
        <position position="116"/>
    </location>
    <ligand>
        <name>Ca(2+)</name>
        <dbReference type="ChEBI" id="CHEBI:29108"/>
        <label>2</label>
    </ligand>
</feature>
<feature type="binding site" evidence="2">
    <location>
        <position position="123"/>
    </location>
    <ligand>
        <name>Ca(2+)</name>
        <dbReference type="ChEBI" id="CHEBI:29108"/>
        <label>2</label>
    </ligand>
</feature>
<feature type="binding site" evidence="2">
    <location>
        <position position="156"/>
    </location>
    <ligand>
        <name>Ca(2+)</name>
        <dbReference type="ChEBI" id="CHEBI:29108"/>
        <label>3</label>
    </ligand>
</feature>
<feature type="binding site" evidence="2">
    <location>
        <position position="158"/>
    </location>
    <ligand>
        <name>Ca(2+)</name>
        <dbReference type="ChEBI" id="CHEBI:29108"/>
        <label>3</label>
    </ligand>
</feature>
<feature type="binding site" evidence="2">
    <location>
        <position position="160"/>
    </location>
    <ligand>
        <name>Ca(2+)</name>
        <dbReference type="ChEBI" id="CHEBI:29108"/>
        <label>3</label>
    </ligand>
</feature>
<feature type="binding site" evidence="2">
    <location>
        <position position="162"/>
    </location>
    <ligand>
        <name>Ca(2+)</name>
        <dbReference type="ChEBI" id="CHEBI:29108"/>
        <label>3</label>
    </ligand>
</feature>
<feature type="binding site" evidence="2">
    <location>
        <position position="167"/>
    </location>
    <ligand>
        <name>Ca(2+)</name>
        <dbReference type="ChEBI" id="CHEBI:29108"/>
        <label>3</label>
    </ligand>
</feature>
<feature type="binding site" evidence="2">
    <location>
        <position position="200"/>
    </location>
    <ligand>
        <name>Ca(2+)</name>
        <dbReference type="ChEBI" id="CHEBI:29108"/>
        <label>4</label>
    </ligand>
</feature>
<feature type="binding site" evidence="2">
    <location>
        <position position="202"/>
    </location>
    <ligand>
        <name>Ca(2+)</name>
        <dbReference type="ChEBI" id="CHEBI:29108"/>
        <label>4</label>
    </ligand>
</feature>
<feature type="binding site" evidence="2">
    <location>
        <position position="204"/>
    </location>
    <ligand>
        <name>Ca(2+)</name>
        <dbReference type="ChEBI" id="CHEBI:29108"/>
        <label>4</label>
    </ligand>
</feature>
<feature type="binding site" evidence="2">
    <location>
        <position position="206"/>
    </location>
    <ligand>
        <name>Ca(2+)</name>
        <dbReference type="ChEBI" id="CHEBI:29108"/>
        <label>4</label>
    </ligand>
</feature>
<feature type="binding site" evidence="2">
    <location>
        <position position="211"/>
    </location>
    <ligand>
        <name>Ca(2+)</name>
        <dbReference type="ChEBI" id="CHEBI:29108"/>
        <label>4</label>
    </ligand>
</feature>
<feature type="modified residue" description="N-acetylthreonine" evidence="6">
    <location>
        <position position="2"/>
    </location>
</feature>
<reference key="1">
    <citation type="journal article" date="1985" name="Nucleic Acids Res.">
        <title>Putative amino acid sequence of chick calcium-binding protein deduced from a complementary DNA sequence.</title>
        <authorList>
            <person name="Wilson P.W."/>
            <person name="Harding M."/>
            <person name="Lawson D.E.M."/>
        </authorList>
    </citation>
    <scope>NUCLEOTIDE SEQUENCE [MRNA]</scope>
</reference>
<reference key="2">
    <citation type="journal article" date="1986" name="Proc. Natl. Acad. Sci. U.S.A.">
        <title>The 28-kDa vitamin D-dependent calcium-binding protein has a six-domain structure.</title>
        <authorList>
            <person name="Hunziker W."/>
        </authorList>
    </citation>
    <scope>NUCLEOTIDE SEQUENCE [MRNA]</scope>
</reference>
<reference key="3">
    <citation type="journal article" date="1988" name="Mol. Endocrinol.">
        <title>Molecular structure of the chicken vitamin D-induced calbindin-D28K gene reveals eleven exons, six Ca2+-binding domains, and numerous promoter regulatory elements.</title>
        <authorList>
            <person name="Minghetti P.P."/>
            <person name="Cancela L."/>
            <person name="Fujisawa Y."/>
            <person name="Theofan G."/>
            <person name="Norman A.W."/>
        </authorList>
    </citation>
    <scope>NUCLEOTIDE SEQUENCE [GENOMIC DNA]</scope>
</reference>
<reference key="4">
    <citation type="journal article" date="1988" name="J. Mol. Biol.">
        <title>Structure of chick chromosomal genes for calbindin and calretinin.</title>
        <authorList>
            <person name="Wilson P.W."/>
            <person name="Rogers J.H."/>
            <person name="Harding M."/>
            <person name="Pohl V."/>
            <person name="Pattyn G."/>
            <person name="Lawson D.E.M."/>
        </authorList>
    </citation>
    <scope>NUCLEOTIDE SEQUENCE [GENOMIC DNA]</scope>
</reference>
<reference key="5">
    <citation type="journal article" date="1987" name="Proc. Natl. Acad. Sci. U.S.A.">
        <title>Chicken intestinal 28-kilodalton calbindin-D: complete amino acid sequence and structural considerations.</title>
        <authorList>
            <person name="Fullmer C.S."/>
            <person name="Wasserman R.H."/>
        </authorList>
    </citation>
    <scope>PROTEIN SEQUENCE OF 2-262</scope>
    <scope>ACETYLATION AT THR-2</scope>
</reference>
<reference key="6">
    <citation type="journal article" date="1998" name="Proc. Natl. Acad. Sci. U.S.A.">
        <title>Molecular markers for cell types of the inner ear and candidate genes for hearing disorders.</title>
        <authorList>
            <person name="Heller S."/>
            <person name="Sheane C.A."/>
            <person name="Javed Z."/>
            <person name="Hudspeth A.J."/>
        </authorList>
    </citation>
    <scope>TISSUE SPECIFICITY</scope>
    <source>
        <strain>White leghorn</strain>
    </source>
</reference>
<keyword id="KW-0007">Acetylation</keyword>
<keyword id="KW-0106">Calcium</keyword>
<keyword id="KW-0903">Direct protein sequencing</keyword>
<keyword id="KW-0479">Metal-binding</keyword>
<keyword id="KW-1185">Reference proteome</keyword>
<keyword id="KW-0677">Repeat</keyword>
<keyword id="KW-0848">Vitamin D</keyword>
<dbReference type="EMBL" id="X03343">
    <property type="protein sequence ID" value="CAA27049.1"/>
    <property type="molecule type" value="mRNA"/>
</dbReference>
<dbReference type="EMBL" id="M14230">
    <property type="protein sequence ID" value="AAA48659.1"/>
    <property type="molecule type" value="mRNA"/>
</dbReference>
<dbReference type="EMBL" id="M31143">
    <property type="protein sequence ID" value="AAA83832.1"/>
    <property type="molecule type" value="Genomic_DNA"/>
</dbReference>
<dbReference type="EMBL" id="M31139">
    <property type="protein sequence ID" value="AAA83832.1"/>
    <property type="status" value="JOINED"/>
    <property type="molecule type" value="Genomic_DNA"/>
</dbReference>
<dbReference type="EMBL" id="M31140">
    <property type="protein sequence ID" value="AAA83832.1"/>
    <property type="status" value="JOINED"/>
    <property type="molecule type" value="Genomic_DNA"/>
</dbReference>
<dbReference type="EMBL" id="M31141">
    <property type="protein sequence ID" value="AAA83832.1"/>
    <property type="status" value="JOINED"/>
    <property type="molecule type" value="Genomic_DNA"/>
</dbReference>
<dbReference type="EMBL" id="M31142">
    <property type="protein sequence ID" value="AAA83832.1"/>
    <property type="status" value="JOINED"/>
    <property type="molecule type" value="Genomic_DNA"/>
</dbReference>
<dbReference type="EMBL" id="X06629">
    <property type="protein sequence ID" value="CAA29843.1"/>
    <property type="molecule type" value="Genomic_DNA"/>
</dbReference>
<dbReference type="EMBL" id="X06630">
    <property type="protein sequence ID" value="CAA29843.1"/>
    <property type="status" value="JOINED"/>
    <property type="molecule type" value="Genomic_DNA"/>
</dbReference>
<dbReference type="EMBL" id="X06631">
    <property type="protein sequence ID" value="CAA29843.1"/>
    <property type="status" value="JOINED"/>
    <property type="molecule type" value="Genomic_DNA"/>
</dbReference>
<dbReference type="EMBL" id="X06632">
    <property type="protein sequence ID" value="CAA29843.1"/>
    <property type="status" value="JOINED"/>
    <property type="molecule type" value="Genomic_DNA"/>
</dbReference>
<dbReference type="EMBL" id="X06633">
    <property type="protein sequence ID" value="CAA29843.1"/>
    <property type="status" value="JOINED"/>
    <property type="molecule type" value="Genomic_DNA"/>
</dbReference>
<dbReference type="PIR" id="A40926">
    <property type="entry name" value="KLCHI"/>
</dbReference>
<dbReference type="RefSeq" id="NP_990844.1">
    <property type="nucleotide sequence ID" value="NM_205513.2"/>
</dbReference>
<dbReference type="SMR" id="P04354"/>
<dbReference type="BioGRID" id="676764">
    <property type="interactions" value="1"/>
</dbReference>
<dbReference type="FunCoup" id="P04354">
    <property type="interactions" value="97"/>
</dbReference>
<dbReference type="IntAct" id="P04354">
    <property type="interactions" value="1"/>
</dbReference>
<dbReference type="STRING" id="9031.ENSGALP00000056213"/>
<dbReference type="iPTMnet" id="P04354"/>
<dbReference type="PaxDb" id="9031-ENSGALP00000026395"/>
<dbReference type="Ensembl" id="ENSGALT00010030833.1">
    <property type="protein sequence ID" value="ENSGALP00010017891.1"/>
    <property type="gene ID" value="ENSGALG00010012850.1"/>
</dbReference>
<dbReference type="GeneID" id="396519"/>
<dbReference type="KEGG" id="gga:396519"/>
<dbReference type="CTD" id="793"/>
<dbReference type="VEuPathDB" id="HostDB:geneid_396519"/>
<dbReference type="eggNOG" id="KOG0027">
    <property type="taxonomic scope" value="Eukaryota"/>
</dbReference>
<dbReference type="GeneTree" id="ENSGT00950000183108"/>
<dbReference type="HOGENOM" id="CLU_054826_1_1_1"/>
<dbReference type="InParanoid" id="P04354"/>
<dbReference type="OMA" id="WLHFDSD"/>
<dbReference type="OrthoDB" id="428774at2759"/>
<dbReference type="PhylomeDB" id="P04354"/>
<dbReference type="TreeFam" id="TF325083"/>
<dbReference type="PRO" id="PR:P04354"/>
<dbReference type="Proteomes" id="UP000000539">
    <property type="component" value="Chromosome 2"/>
</dbReference>
<dbReference type="Bgee" id="ENSGALG00000032282">
    <property type="expression patterns" value="Expressed in kidney and 3 other cell types or tissues"/>
</dbReference>
<dbReference type="GO" id="GO:0005829">
    <property type="term" value="C:cytosol"/>
    <property type="evidence" value="ECO:0000318"/>
    <property type="project" value="GO_Central"/>
</dbReference>
<dbReference type="GO" id="GO:0030425">
    <property type="term" value="C:dendrite"/>
    <property type="evidence" value="ECO:0000318"/>
    <property type="project" value="GO_Central"/>
</dbReference>
<dbReference type="GO" id="GO:0005634">
    <property type="term" value="C:nucleus"/>
    <property type="evidence" value="ECO:0000318"/>
    <property type="project" value="GO_Central"/>
</dbReference>
<dbReference type="GO" id="GO:0045211">
    <property type="term" value="C:postsynaptic membrane"/>
    <property type="evidence" value="ECO:0000314"/>
    <property type="project" value="UniProtKB"/>
</dbReference>
<dbReference type="GO" id="GO:0045202">
    <property type="term" value="C:synapse"/>
    <property type="evidence" value="ECO:0000318"/>
    <property type="project" value="GO_Central"/>
</dbReference>
<dbReference type="GO" id="GO:0043195">
    <property type="term" value="C:terminal bouton"/>
    <property type="evidence" value="ECO:0000318"/>
    <property type="project" value="GO_Central"/>
</dbReference>
<dbReference type="GO" id="GO:0012506">
    <property type="term" value="C:vesicle membrane"/>
    <property type="evidence" value="ECO:0000303"/>
    <property type="project" value="UniProtKB"/>
</dbReference>
<dbReference type="GO" id="GO:0005509">
    <property type="term" value="F:calcium ion binding"/>
    <property type="evidence" value="ECO:0000250"/>
    <property type="project" value="UniProtKB"/>
</dbReference>
<dbReference type="GO" id="GO:0005499">
    <property type="term" value="F:vitamin D binding"/>
    <property type="evidence" value="ECO:0007669"/>
    <property type="project" value="UniProtKB-KW"/>
</dbReference>
<dbReference type="GO" id="GO:0006816">
    <property type="term" value="P:calcium ion transport"/>
    <property type="evidence" value="ECO:0000304"/>
    <property type="project" value="UniProtKB"/>
</dbReference>
<dbReference type="GO" id="GO:0006874">
    <property type="term" value="P:intracellular calcium ion homeostasis"/>
    <property type="evidence" value="ECO:0000303"/>
    <property type="project" value="UniProtKB"/>
</dbReference>
<dbReference type="GO" id="GO:0019233">
    <property type="term" value="P:sensory perception of pain"/>
    <property type="evidence" value="ECO:0000303"/>
    <property type="project" value="UniProtKB"/>
</dbReference>
<dbReference type="CDD" id="cd16176">
    <property type="entry name" value="EFh_HEF_CB"/>
    <property type="match status" value="1"/>
</dbReference>
<dbReference type="FunFam" id="1.10.238.10:FF:000108">
    <property type="entry name" value="Calbindin 1"/>
    <property type="match status" value="1"/>
</dbReference>
<dbReference type="FunFam" id="1.10.238.10:FF:000147">
    <property type="entry name" value="Calbindin 1"/>
    <property type="match status" value="1"/>
</dbReference>
<dbReference type="FunFam" id="1.10.238.10:FF:000054">
    <property type="entry name" value="Calbindin 2"/>
    <property type="match status" value="1"/>
</dbReference>
<dbReference type="Gene3D" id="1.10.238.10">
    <property type="entry name" value="EF-hand"/>
    <property type="match status" value="3"/>
</dbReference>
<dbReference type="InterPro" id="IPR051001">
    <property type="entry name" value="Calbindin_Ca-bind"/>
</dbReference>
<dbReference type="InterPro" id="IPR029634">
    <property type="entry name" value="Calbindin_six-EFh_dom"/>
</dbReference>
<dbReference type="InterPro" id="IPR011992">
    <property type="entry name" value="EF-hand-dom_pair"/>
</dbReference>
<dbReference type="InterPro" id="IPR018247">
    <property type="entry name" value="EF_Hand_1_Ca_BS"/>
</dbReference>
<dbReference type="InterPro" id="IPR002048">
    <property type="entry name" value="EF_hand_dom"/>
</dbReference>
<dbReference type="PANTHER" id="PTHR19972">
    <property type="entry name" value="CALBINDIN"/>
    <property type="match status" value="1"/>
</dbReference>
<dbReference type="PANTHER" id="PTHR19972:SF14">
    <property type="entry name" value="CALBINDIN"/>
    <property type="match status" value="1"/>
</dbReference>
<dbReference type="Pfam" id="PF00036">
    <property type="entry name" value="EF-hand_1"/>
    <property type="match status" value="1"/>
</dbReference>
<dbReference type="Pfam" id="PF13499">
    <property type="entry name" value="EF-hand_7"/>
    <property type="match status" value="1"/>
</dbReference>
<dbReference type="SMART" id="SM00054">
    <property type="entry name" value="EFh"/>
    <property type="match status" value="4"/>
</dbReference>
<dbReference type="SUPFAM" id="SSF47473">
    <property type="entry name" value="EF-hand"/>
    <property type="match status" value="2"/>
</dbReference>
<dbReference type="PROSITE" id="PS00018">
    <property type="entry name" value="EF_HAND_1"/>
    <property type="match status" value="4"/>
</dbReference>
<dbReference type="PROSITE" id="PS50222">
    <property type="entry name" value="EF_HAND_2"/>
    <property type="match status" value="5"/>
</dbReference>
<comment type="function">
    <text>Buffers cytosolic calcium. May stimulate a membrane Ca(2+)-ATPase and a 3',5'-cyclic nucleotide phosphodiesterase.</text>
</comment>
<comment type="tissue specificity">
    <text evidence="4">Highly abundant in supporting cells. Also present in hair cells.</text>
</comment>
<comment type="domain">
    <text evidence="1">This protein has four functional calcium-binding sites; potential sites II and VI have lost affinity for calcium.</text>
</comment>
<comment type="similarity">
    <text evidence="5">Belongs to the calbindin family.</text>
</comment>
<protein>
    <recommendedName>
        <fullName>Calbindin</fullName>
    </recommendedName>
    <alternativeName>
        <fullName>Calbindin D28</fullName>
    </alternativeName>
    <alternativeName>
        <fullName>D-28K</fullName>
    </alternativeName>
    <alternativeName>
        <fullName>Vitamin D-dependent calcium-binding protein, avian-type</fullName>
    </alternativeName>
</protein>